<evidence type="ECO:0000255" key="1">
    <source>
        <dbReference type="HAMAP-Rule" id="MF_00164"/>
    </source>
</evidence>
<protein>
    <recommendedName>
        <fullName evidence="1">Glutamine--fructose-6-phosphate aminotransferase [isomerizing]</fullName>
        <ecNumber evidence="1">2.6.1.16</ecNumber>
    </recommendedName>
    <alternativeName>
        <fullName evidence="1">D-fructose-6-phosphate amidotransferase</fullName>
    </alternativeName>
    <alternativeName>
        <fullName evidence="1">GFAT</fullName>
    </alternativeName>
    <alternativeName>
        <fullName evidence="1">Glucosamine-6-phosphate synthase</fullName>
    </alternativeName>
    <alternativeName>
        <fullName evidence="1">Hexosephosphate aminotransferase</fullName>
    </alternativeName>
    <alternativeName>
        <fullName evidence="1">L-glutamine--D-fructose-6-phosphate amidotransferase</fullName>
    </alternativeName>
</protein>
<name>GLMS_WIGBR</name>
<keyword id="KW-0032">Aminotransferase</keyword>
<keyword id="KW-0963">Cytoplasm</keyword>
<keyword id="KW-0315">Glutamine amidotransferase</keyword>
<keyword id="KW-1185">Reference proteome</keyword>
<keyword id="KW-0677">Repeat</keyword>
<keyword id="KW-0808">Transferase</keyword>
<gene>
    <name evidence="1" type="primary">glmS</name>
    <name type="ordered locus">WIGBR0110</name>
</gene>
<comment type="function">
    <text evidence="1">Catalyzes the first step in hexosamine metabolism, converting fructose-6P into glucosamine-6P using glutamine as a nitrogen source.</text>
</comment>
<comment type="catalytic activity">
    <reaction evidence="1">
        <text>D-fructose 6-phosphate + L-glutamine = D-glucosamine 6-phosphate + L-glutamate</text>
        <dbReference type="Rhea" id="RHEA:13237"/>
        <dbReference type="ChEBI" id="CHEBI:29985"/>
        <dbReference type="ChEBI" id="CHEBI:58359"/>
        <dbReference type="ChEBI" id="CHEBI:58725"/>
        <dbReference type="ChEBI" id="CHEBI:61527"/>
        <dbReference type="EC" id="2.6.1.16"/>
    </reaction>
</comment>
<comment type="subunit">
    <text evidence="1">Homodimer.</text>
</comment>
<comment type="subcellular location">
    <subcellularLocation>
        <location evidence="1">Cytoplasm</location>
    </subcellularLocation>
</comment>
<sequence length="612" mass="68922">MCGIVGIVSQRNILKFLLTGLNHLEYRGYDSSGLAVIDNNNKLRCIKKVGKVNVLEKAILNKKMSFLGKTGVAHTRWATHGPPTENNAHPHISGNIAVVHNGIIENHEHLRSKLKSYKYKFNSDTDTEVIAHLIHWEQNKNGGSLTEVVKRVSRMLFGIYSTVVMDSNNPNILIAECFGSPLIIGLGICENSIASDQLALLNLSKNFIFLKNGDIAEITNSKIRIWDKFNNKINRDTVQTKISLDINKKGNFKHFLKKEIFEQPKAIKNTLKNRIKKNYIYLSELSGKFNKTIKYIKHIKLVACGSSYNSAMVSKYWFEKFAGLSCNIEIASEFCYRKIVICKNSLLIFLSQSGETADILSALRLIKKFNYVFSISICNTPESSLIRESEISILTHAGVEISVASTKTFTTQLTALLMLISHICYIRKINEKSQTDIFNAIQILPNRIEQMLLVKNSVKKLVKNFSNKKNVIIIGRGELYPIAIEAALKLKETSYIHAEGYAAGELKHGTLALIDTNTPVIVLVCKNKLLRKTLSNIEEIKSRGGQIYIFSEKSIFFSKSSNVNITKLPFVEELLVPMAYIVPMQLLSYYIGIEKNVDVDHPRNLAKTVTVE</sequence>
<dbReference type="EC" id="2.6.1.16" evidence="1"/>
<dbReference type="EMBL" id="BA000021">
    <property type="protein sequence ID" value="BAC24157.1"/>
    <property type="molecule type" value="Genomic_DNA"/>
</dbReference>
<dbReference type="SMR" id="Q8D3J0"/>
<dbReference type="STRING" id="36870.gene:10368489"/>
<dbReference type="KEGG" id="wbr:glmS"/>
<dbReference type="eggNOG" id="COG0449">
    <property type="taxonomic scope" value="Bacteria"/>
</dbReference>
<dbReference type="HOGENOM" id="CLU_012520_5_2_6"/>
<dbReference type="OrthoDB" id="9761808at2"/>
<dbReference type="Proteomes" id="UP000000562">
    <property type="component" value="Chromosome"/>
</dbReference>
<dbReference type="GO" id="GO:0005829">
    <property type="term" value="C:cytosol"/>
    <property type="evidence" value="ECO:0007669"/>
    <property type="project" value="TreeGrafter"/>
</dbReference>
<dbReference type="GO" id="GO:0097367">
    <property type="term" value="F:carbohydrate derivative binding"/>
    <property type="evidence" value="ECO:0007669"/>
    <property type="project" value="InterPro"/>
</dbReference>
<dbReference type="GO" id="GO:0004360">
    <property type="term" value="F:glutamine-fructose-6-phosphate transaminase (isomerizing) activity"/>
    <property type="evidence" value="ECO:0007669"/>
    <property type="project" value="UniProtKB-UniRule"/>
</dbReference>
<dbReference type="GO" id="GO:0005975">
    <property type="term" value="P:carbohydrate metabolic process"/>
    <property type="evidence" value="ECO:0007669"/>
    <property type="project" value="UniProtKB-UniRule"/>
</dbReference>
<dbReference type="GO" id="GO:0006002">
    <property type="term" value="P:fructose 6-phosphate metabolic process"/>
    <property type="evidence" value="ECO:0007669"/>
    <property type="project" value="TreeGrafter"/>
</dbReference>
<dbReference type="GO" id="GO:0006487">
    <property type="term" value="P:protein N-linked glycosylation"/>
    <property type="evidence" value="ECO:0007669"/>
    <property type="project" value="TreeGrafter"/>
</dbReference>
<dbReference type="GO" id="GO:0006047">
    <property type="term" value="P:UDP-N-acetylglucosamine metabolic process"/>
    <property type="evidence" value="ECO:0007669"/>
    <property type="project" value="TreeGrafter"/>
</dbReference>
<dbReference type="CDD" id="cd00714">
    <property type="entry name" value="GFAT"/>
    <property type="match status" value="1"/>
</dbReference>
<dbReference type="CDD" id="cd05008">
    <property type="entry name" value="SIS_GlmS_GlmD_1"/>
    <property type="match status" value="1"/>
</dbReference>
<dbReference type="CDD" id="cd05009">
    <property type="entry name" value="SIS_GlmS_GlmD_2"/>
    <property type="match status" value="1"/>
</dbReference>
<dbReference type="FunFam" id="3.40.50.10490:FF:000001">
    <property type="entry name" value="Glutamine--fructose-6-phosphate aminotransferase [isomerizing]"/>
    <property type="match status" value="1"/>
</dbReference>
<dbReference type="FunFam" id="3.40.50.10490:FF:000002">
    <property type="entry name" value="Glutamine--fructose-6-phosphate aminotransferase [isomerizing]"/>
    <property type="match status" value="1"/>
</dbReference>
<dbReference type="FunFam" id="3.60.20.10:FF:000006">
    <property type="entry name" value="Glutamine--fructose-6-phosphate aminotransferase [isomerizing]"/>
    <property type="match status" value="1"/>
</dbReference>
<dbReference type="Gene3D" id="3.40.50.10490">
    <property type="entry name" value="Glucose-6-phosphate isomerase like protein, domain 1"/>
    <property type="match status" value="2"/>
</dbReference>
<dbReference type="Gene3D" id="3.60.20.10">
    <property type="entry name" value="Glutamine Phosphoribosylpyrophosphate, subunit 1, domain 1"/>
    <property type="match status" value="1"/>
</dbReference>
<dbReference type="HAMAP" id="MF_00164">
    <property type="entry name" value="GlmS"/>
    <property type="match status" value="1"/>
</dbReference>
<dbReference type="InterPro" id="IPR017932">
    <property type="entry name" value="GATase_2_dom"/>
</dbReference>
<dbReference type="InterPro" id="IPR005855">
    <property type="entry name" value="GFAT"/>
</dbReference>
<dbReference type="InterPro" id="IPR047084">
    <property type="entry name" value="GFAT_N"/>
</dbReference>
<dbReference type="InterPro" id="IPR035466">
    <property type="entry name" value="GlmS/AgaS_SIS"/>
</dbReference>
<dbReference type="InterPro" id="IPR035490">
    <property type="entry name" value="GlmS/FrlB_SIS"/>
</dbReference>
<dbReference type="InterPro" id="IPR029055">
    <property type="entry name" value="Ntn_hydrolases_N"/>
</dbReference>
<dbReference type="InterPro" id="IPR001347">
    <property type="entry name" value="SIS_dom"/>
</dbReference>
<dbReference type="InterPro" id="IPR046348">
    <property type="entry name" value="SIS_dom_sf"/>
</dbReference>
<dbReference type="NCBIfam" id="TIGR01135">
    <property type="entry name" value="glmS"/>
    <property type="match status" value="1"/>
</dbReference>
<dbReference type="NCBIfam" id="NF001484">
    <property type="entry name" value="PRK00331.1"/>
    <property type="match status" value="1"/>
</dbReference>
<dbReference type="PANTHER" id="PTHR10937">
    <property type="entry name" value="GLUCOSAMINE--FRUCTOSE-6-PHOSPHATE AMINOTRANSFERASE, ISOMERIZING"/>
    <property type="match status" value="1"/>
</dbReference>
<dbReference type="PANTHER" id="PTHR10937:SF0">
    <property type="entry name" value="GLUTAMINE--FRUCTOSE-6-PHOSPHATE TRANSAMINASE (ISOMERIZING)"/>
    <property type="match status" value="1"/>
</dbReference>
<dbReference type="Pfam" id="PF13522">
    <property type="entry name" value="GATase_6"/>
    <property type="match status" value="1"/>
</dbReference>
<dbReference type="Pfam" id="PF01380">
    <property type="entry name" value="SIS"/>
    <property type="match status" value="2"/>
</dbReference>
<dbReference type="SUPFAM" id="SSF56235">
    <property type="entry name" value="N-terminal nucleophile aminohydrolases (Ntn hydrolases)"/>
    <property type="match status" value="1"/>
</dbReference>
<dbReference type="SUPFAM" id="SSF53697">
    <property type="entry name" value="SIS domain"/>
    <property type="match status" value="1"/>
</dbReference>
<dbReference type="PROSITE" id="PS51278">
    <property type="entry name" value="GATASE_TYPE_2"/>
    <property type="match status" value="1"/>
</dbReference>
<dbReference type="PROSITE" id="PS51464">
    <property type="entry name" value="SIS"/>
    <property type="match status" value="2"/>
</dbReference>
<accession>Q8D3J0</accession>
<feature type="initiator methionine" description="Removed" evidence="1">
    <location>
        <position position="1"/>
    </location>
</feature>
<feature type="chain" id="PRO_0000135413" description="Glutamine--fructose-6-phosphate aminotransferase [isomerizing]">
    <location>
        <begin position="2"/>
        <end position="612"/>
    </location>
</feature>
<feature type="domain" description="Glutamine amidotransferase type-2" evidence="1">
    <location>
        <begin position="2"/>
        <end position="221"/>
    </location>
</feature>
<feature type="domain" description="SIS 1" evidence="1">
    <location>
        <begin position="289"/>
        <end position="429"/>
    </location>
</feature>
<feature type="domain" description="SIS 2" evidence="1">
    <location>
        <begin position="461"/>
        <end position="602"/>
    </location>
</feature>
<feature type="active site" description="Nucleophile; for GATase activity" evidence="1">
    <location>
        <position position="2"/>
    </location>
</feature>
<feature type="active site" description="For Fru-6P isomerization activity" evidence="1">
    <location>
        <position position="607"/>
    </location>
</feature>
<organism>
    <name type="scientific">Wigglesworthia glossinidia brevipalpis</name>
    <dbReference type="NCBI Taxonomy" id="36870"/>
    <lineage>
        <taxon>Bacteria</taxon>
        <taxon>Pseudomonadati</taxon>
        <taxon>Pseudomonadota</taxon>
        <taxon>Gammaproteobacteria</taxon>
        <taxon>Enterobacterales</taxon>
        <taxon>Erwiniaceae</taxon>
        <taxon>Wigglesworthia</taxon>
    </lineage>
</organism>
<proteinExistence type="inferred from homology"/>
<reference key="1">
    <citation type="journal article" date="2002" name="Nat. Genet.">
        <title>Genome sequence of the endocellular obligate symbiont of tsetse flies, Wigglesworthia glossinidia.</title>
        <authorList>
            <person name="Akman L."/>
            <person name="Yamashita A."/>
            <person name="Watanabe H."/>
            <person name="Oshima K."/>
            <person name="Shiba T."/>
            <person name="Hattori M."/>
            <person name="Aksoy S."/>
        </authorList>
    </citation>
    <scope>NUCLEOTIDE SEQUENCE [LARGE SCALE GENOMIC DNA]</scope>
</reference>